<keyword id="KW-1185">Reference proteome</keyword>
<keyword id="KW-0687">Ribonucleoprotein</keyword>
<keyword id="KW-0689">Ribosomal protein</keyword>
<keyword id="KW-0694">RNA-binding</keyword>
<keyword id="KW-0699">rRNA-binding</keyword>
<organism>
    <name type="scientific">Thermosynechococcus vestitus (strain NIES-2133 / IAM M-273 / BP-1)</name>
    <dbReference type="NCBI Taxonomy" id="197221"/>
    <lineage>
        <taxon>Bacteria</taxon>
        <taxon>Bacillati</taxon>
        <taxon>Cyanobacteriota</taxon>
        <taxon>Cyanophyceae</taxon>
        <taxon>Acaryochloridales</taxon>
        <taxon>Thermosynechococcaceae</taxon>
        <taxon>Thermosynechococcus</taxon>
    </lineage>
</organism>
<name>RS18_THEVB</name>
<accession>Q8DH98</accession>
<gene>
    <name evidence="1" type="primary">rpsR</name>
    <name evidence="1" type="synonym">rps18</name>
    <name type="ordered locus">tsr2061</name>
</gene>
<protein>
    <recommendedName>
        <fullName evidence="1">Small ribosomal subunit protein bS18</fullName>
    </recommendedName>
    <alternativeName>
        <fullName evidence="2">30S ribosomal protein S18</fullName>
    </alternativeName>
</protein>
<comment type="function">
    <text evidence="1">Binds as a heterodimer with protein bS6 to the central domain of the 16S rRNA, where it helps stabilize the platform of the 30S subunit.</text>
</comment>
<comment type="subunit">
    <text evidence="1">Part of the 30S ribosomal subunit. Forms a tight heterodimer with protein bS6.</text>
</comment>
<comment type="similarity">
    <text evidence="1">Belongs to the bacterial ribosomal protein bS18 family.</text>
</comment>
<reference key="1">
    <citation type="journal article" date="2002" name="DNA Res.">
        <title>Complete genome structure of the thermophilic cyanobacterium Thermosynechococcus elongatus BP-1.</title>
        <authorList>
            <person name="Nakamura Y."/>
            <person name="Kaneko T."/>
            <person name="Sato S."/>
            <person name="Ikeuchi M."/>
            <person name="Katoh H."/>
            <person name="Sasamoto S."/>
            <person name="Watanabe A."/>
            <person name="Iriguchi M."/>
            <person name="Kawashima K."/>
            <person name="Kimura T."/>
            <person name="Kishida Y."/>
            <person name="Kiyokawa C."/>
            <person name="Kohara M."/>
            <person name="Matsumoto M."/>
            <person name="Matsuno A."/>
            <person name="Nakazaki N."/>
            <person name="Shimpo S."/>
            <person name="Sugimoto M."/>
            <person name="Takeuchi C."/>
            <person name="Yamada M."/>
            <person name="Tabata S."/>
        </authorList>
    </citation>
    <scope>NUCLEOTIDE SEQUENCE [LARGE SCALE GENOMIC DNA]</scope>
    <source>
        <strain>NIES-2133 / IAM M-273 / BP-1</strain>
    </source>
</reference>
<feature type="chain" id="PRO_0000111245" description="Small ribosomal subunit protein bS18">
    <location>
        <begin position="1"/>
        <end position="71"/>
    </location>
</feature>
<dbReference type="EMBL" id="BA000039">
    <property type="protein sequence ID" value="BAC09613.1"/>
    <property type="molecule type" value="Genomic_DNA"/>
</dbReference>
<dbReference type="RefSeq" id="NP_682851.1">
    <property type="nucleotide sequence ID" value="NC_004113.1"/>
</dbReference>
<dbReference type="RefSeq" id="WP_011057896.1">
    <property type="nucleotide sequence ID" value="NC_004113.1"/>
</dbReference>
<dbReference type="SMR" id="Q8DH98"/>
<dbReference type="STRING" id="197221.gene:10748670"/>
<dbReference type="EnsemblBacteria" id="BAC09613">
    <property type="protein sequence ID" value="BAC09613"/>
    <property type="gene ID" value="BAC09613"/>
</dbReference>
<dbReference type="KEGG" id="tel:tsr2061"/>
<dbReference type="PATRIC" id="fig|197221.4.peg.2156"/>
<dbReference type="eggNOG" id="COG0238">
    <property type="taxonomic scope" value="Bacteria"/>
</dbReference>
<dbReference type="Proteomes" id="UP000000440">
    <property type="component" value="Chromosome"/>
</dbReference>
<dbReference type="GO" id="GO:1990904">
    <property type="term" value="C:ribonucleoprotein complex"/>
    <property type="evidence" value="ECO:0007669"/>
    <property type="project" value="UniProtKB-KW"/>
</dbReference>
<dbReference type="GO" id="GO:0005840">
    <property type="term" value="C:ribosome"/>
    <property type="evidence" value="ECO:0007669"/>
    <property type="project" value="UniProtKB-KW"/>
</dbReference>
<dbReference type="GO" id="GO:0070181">
    <property type="term" value="F:small ribosomal subunit rRNA binding"/>
    <property type="evidence" value="ECO:0007669"/>
    <property type="project" value="TreeGrafter"/>
</dbReference>
<dbReference type="GO" id="GO:0003735">
    <property type="term" value="F:structural constituent of ribosome"/>
    <property type="evidence" value="ECO:0007669"/>
    <property type="project" value="InterPro"/>
</dbReference>
<dbReference type="GO" id="GO:0006412">
    <property type="term" value="P:translation"/>
    <property type="evidence" value="ECO:0007669"/>
    <property type="project" value="UniProtKB-UniRule"/>
</dbReference>
<dbReference type="FunFam" id="4.10.640.10:FF:000002">
    <property type="entry name" value="30S ribosomal protein S18, chloroplastic"/>
    <property type="match status" value="1"/>
</dbReference>
<dbReference type="Gene3D" id="4.10.640.10">
    <property type="entry name" value="Ribosomal protein S18"/>
    <property type="match status" value="1"/>
</dbReference>
<dbReference type="HAMAP" id="MF_00270">
    <property type="entry name" value="Ribosomal_bS18"/>
    <property type="match status" value="1"/>
</dbReference>
<dbReference type="InterPro" id="IPR001648">
    <property type="entry name" value="Ribosomal_bS18"/>
</dbReference>
<dbReference type="InterPro" id="IPR018275">
    <property type="entry name" value="Ribosomal_bS18_CS"/>
</dbReference>
<dbReference type="InterPro" id="IPR036870">
    <property type="entry name" value="Ribosomal_bS18_sf"/>
</dbReference>
<dbReference type="NCBIfam" id="TIGR00165">
    <property type="entry name" value="S18"/>
    <property type="match status" value="1"/>
</dbReference>
<dbReference type="PANTHER" id="PTHR13479">
    <property type="entry name" value="30S RIBOSOMAL PROTEIN S18"/>
    <property type="match status" value="1"/>
</dbReference>
<dbReference type="PANTHER" id="PTHR13479:SF40">
    <property type="entry name" value="SMALL RIBOSOMAL SUBUNIT PROTEIN BS18M"/>
    <property type="match status" value="1"/>
</dbReference>
<dbReference type="Pfam" id="PF01084">
    <property type="entry name" value="Ribosomal_S18"/>
    <property type="match status" value="1"/>
</dbReference>
<dbReference type="PRINTS" id="PR00974">
    <property type="entry name" value="RIBOSOMALS18"/>
</dbReference>
<dbReference type="SUPFAM" id="SSF46911">
    <property type="entry name" value="Ribosomal protein S18"/>
    <property type="match status" value="1"/>
</dbReference>
<dbReference type="PROSITE" id="PS00057">
    <property type="entry name" value="RIBOSOMAL_S18"/>
    <property type="match status" value="1"/>
</dbReference>
<sequence>MAFYRRRISPIPPGQPIDYKDVDLLRRFITERGKILPRRVTGLTAKQQRQLAVAIKRARIMALLPFLNLEG</sequence>
<evidence type="ECO:0000255" key="1">
    <source>
        <dbReference type="HAMAP-Rule" id="MF_00270"/>
    </source>
</evidence>
<evidence type="ECO:0000305" key="2"/>
<proteinExistence type="inferred from homology"/>